<evidence type="ECO:0000255" key="1">
    <source>
        <dbReference type="HAMAP-Rule" id="MF_00392"/>
    </source>
</evidence>
<protein>
    <recommendedName>
        <fullName evidence="1">Lipid-A-disaccharide synthase</fullName>
        <ecNumber evidence="1">2.4.1.182</ecNumber>
    </recommendedName>
</protein>
<feature type="chain" id="PRO_1000049425" description="Lipid-A-disaccharide synthase">
    <location>
        <begin position="1"/>
        <end position="379"/>
    </location>
</feature>
<keyword id="KW-0328">Glycosyltransferase</keyword>
<keyword id="KW-0441">Lipid A biosynthesis</keyword>
<keyword id="KW-0444">Lipid biosynthesis</keyword>
<keyword id="KW-0443">Lipid metabolism</keyword>
<keyword id="KW-0808">Transferase</keyword>
<accession>A7MY02</accession>
<name>LPXB_VIBC1</name>
<organism>
    <name type="scientific">Vibrio campbellii (strain ATCC BAA-1116)</name>
    <dbReference type="NCBI Taxonomy" id="2902295"/>
    <lineage>
        <taxon>Bacteria</taxon>
        <taxon>Pseudomonadati</taxon>
        <taxon>Pseudomonadota</taxon>
        <taxon>Gammaproteobacteria</taxon>
        <taxon>Vibrionales</taxon>
        <taxon>Vibrionaceae</taxon>
        <taxon>Vibrio</taxon>
    </lineage>
</organism>
<gene>
    <name evidence="1" type="primary">lpxB</name>
    <name type="ordered locus">VIBHAR_03224</name>
</gene>
<proteinExistence type="inferred from homology"/>
<sequence length="379" mass="42782">MERPLRIGIIAGELSGDTLGEGFIKAVKQQYPDAEFVGIGGPKMIAQGCESLFDMEELAVMGLVEVLGRLPRLLKVKAQLVKYFTENPPDVFIGIDAPDFNLRVELDLKNAGIKTVHYVSPSVWAWRQKRIFKIEAATNLVLAFLPFEKAFYDKFNVPCEFIGHTLADAIPLQSDKASAREILGLEQDKQWLSVLPGSRGSELKMLSQPFIETCKKLHQKFPDIGFVVALVNQKRREQFEQAWKEHAPELDFKLVDDTARNVITASDAVMLASGTVALECMLLKRPMVVGYRVNAVTAFLAKRLLKTKYVSLPNILADTELVKEYLQDDCTPDNLFDEVSRLLESDNREMLDKFTEMHHWIRKDADQQAANAVLKLIEK</sequence>
<reference key="1">
    <citation type="submission" date="2007-08" db="EMBL/GenBank/DDBJ databases">
        <authorList>
            <consortium name="The Vibrio harveyi Genome Sequencing Project"/>
            <person name="Bassler B."/>
            <person name="Clifton S.W."/>
            <person name="Fulton L."/>
            <person name="Delehaunty K."/>
            <person name="Fronick C."/>
            <person name="Harrison M."/>
            <person name="Markivic C."/>
            <person name="Fulton R."/>
            <person name="Tin-Wollam A.-M."/>
            <person name="Shah N."/>
            <person name="Pepin K."/>
            <person name="Nash W."/>
            <person name="Thiruvilangam P."/>
            <person name="Bhonagiri V."/>
            <person name="Waters C."/>
            <person name="Tu K.C."/>
            <person name="Irgon J."/>
            <person name="Wilson R.K."/>
        </authorList>
    </citation>
    <scope>NUCLEOTIDE SEQUENCE [LARGE SCALE GENOMIC DNA]</scope>
    <source>
        <strain>ATCC BAA-1116 / BB120</strain>
    </source>
</reference>
<dbReference type="EC" id="2.4.1.182" evidence="1"/>
<dbReference type="EMBL" id="CP000789">
    <property type="protein sequence ID" value="ABU72173.1"/>
    <property type="molecule type" value="Genomic_DNA"/>
</dbReference>
<dbReference type="RefSeq" id="WP_012128689.1">
    <property type="nucleotide sequence ID" value="NC_009783.1"/>
</dbReference>
<dbReference type="SMR" id="A7MY02"/>
<dbReference type="CAZy" id="GT19">
    <property type="family name" value="Glycosyltransferase Family 19"/>
</dbReference>
<dbReference type="KEGG" id="vha:VIBHAR_03224"/>
<dbReference type="PATRIC" id="fig|338187.25.peg.2966"/>
<dbReference type="UniPathway" id="UPA00973"/>
<dbReference type="Proteomes" id="UP000008152">
    <property type="component" value="Chromosome I"/>
</dbReference>
<dbReference type="GO" id="GO:0016020">
    <property type="term" value="C:membrane"/>
    <property type="evidence" value="ECO:0007669"/>
    <property type="project" value="GOC"/>
</dbReference>
<dbReference type="GO" id="GO:0008915">
    <property type="term" value="F:lipid-A-disaccharide synthase activity"/>
    <property type="evidence" value="ECO:0007669"/>
    <property type="project" value="UniProtKB-UniRule"/>
</dbReference>
<dbReference type="GO" id="GO:0005543">
    <property type="term" value="F:phospholipid binding"/>
    <property type="evidence" value="ECO:0007669"/>
    <property type="project" value="TreeGrafter"/>
</dbReference>
<dbReference type="GO" id="GO:0009245">
    <property type="term" value="P:lipid A biosynthetic process"/>
    <property type="evidence" value="ECO:0007669"/>
    <property type="project" value="UniProtKB-UniRule"/>
</dbReference>
<dbReference type="CDD" id="cd01635">
    <property type="entry name" value="Glycosyltransferase_GTB-type"/>
    <property type="match status" value="1"/>
</dbReference>
<dbReference type="HAMAP" id="MF_00392">
    <property type="entry name" value="LpxB"/>
    <property type="match status" value="1"/>
</dbReference>
<dbReference type="InterPro" id="IPR003835">
    <property type="entry name" value="Glyco_trans_19"/>
</dbReference>
<dbReference type="NCBIfam" id="TIGR00215">
    <property type="entry name" value="lpxB"/>
    <property type="match status" value="1"/>
</dbReference>
<dbReference type="PANTHER" id="PTHR30372">
    <property type="entry name" value="LIPID-A-DISACCHARIDE SYNTHASE"/>
    <property type="match status" value="1"/>
</dbReference>
<dbReference type="PANTHER" id="PTHR30372:SF4">
    <property type="entry name" value="LIPID-A-DISACCHARIDE SYNTHASE, MITOCHONDRIAL-RELATED"/>
    <property type="match status" value="1"/>
</dbReference>
<dbReference type="Pfam" id="PF02684">
    <property type="entry name" value="LpxB"/>
    <property type="match status" value="1"/>
</dbReference>
<dbReference type="SUPFAM" id="SSF53756">
    <property type="entry name" value="UDP-Glycosyltransferase/glycogen phosphorylase"/>
    <property type="match status" value="1"/>
</dbReference>
<comment type="function">
    <text evidence="1">Condensation of UDP-2,3-diacylglucosamine and 2,3-diacylglucosamine-1-phosphate to form lipid A disaccharide, a precursor of lipid A, a phosphorylated glycolipid that anchors the lipopolysaccharide to the outer membrane of the cell.</text>
</comment>
<comment type="catalytic activity">
    <reaction evidence="1">
        <text>a lipid X + a UDP-2-N,3-O-bis[(3R)-3-hydroxyacyl]-alpha-D-glucosamine = a lipid A disaccharide + UDP + H(+)</text>
        <dbReference type="Rhea" id="RHEA:67828"/>
        <dbReference type="ChEBI" id="CHEBI:15378"/>
        <dbReference type="ChEBI" id="CHEBI:58223"/>
        <dbReference type="ChEBI" id="CHEBI:137748"/>
        <dbReference type="ChEBI" id="CHEBI:176338"/>
        <dbReference type="ChEBI" id="CHEBI:176343"/>
        <dbReference type="EC" id="2.4.1.182"/>
    </reaction>
</comment>
<comment type="pathway">
    <text evidence="1">Bacterial outer membrane biogenesis; LPS lipid A biosynthesis.</text>
</comment>
<comment type="similarity">
    <text evidence="1">Belongs to the LpxB family.</text>
</comment>